<dbReference type="EMBL" id="AK051895">
    <property type="protein sequence ID" value="BAC34805.1"/>
    <property type="molecule type" value="mRNA"/>
</dbReference>
<dbReference type="EMBL" id="AL604022">
    <property type="status" value="NOT_ANNOTATED_CDS"/>
    <property type="molecule type" value="Genomic_DNA"/>
</dbReference>
<dbReference type="EMBL" id="BC055691">
    <property type="protein sequence ID" value="AAH55691.1"/>
    <property type="molecule type" value="mRNA"/>
</dbReference>
<dbReference type="EMBL" id="AK122329">
    <property type="protein sequence ID" value="BAC65611.1"/>
    <property type="molecule type" value="mRNA"/>
</dbReference>
<dbReference type="CCDS" id="CCDS48879.1">
    <molecule id="Q7TNF8-1"/>
</dbReference>
<dbReference type="RefSeq" id="NP_766037.2">
    <molecule id="Q7TNF8-1"/>
    <property type="nucleotide sequence ID" value="NM_172449.2"/>
</dbReference>
<dbReference type="RefSeq" id="XP_006532773.1">
    <molecule id="Q7TNF8-2"/>
    <property type="nucleotide sequence ID" value="XM_006532710.5"/>
</dbReference>
<dbReference type="SMR" id="Q7TNF8"/>
<dbReference type="BioGRID" id="228919">
    <property type="interactions" value="2"/>
</dbReference>
<dbReference type="FunCoup" id="Q7TNF8">
    <property type="interactions" value="310"/>
</dbReference>
<dbReference type="STRING" id="10090.ENSMUSP00000048063"/>
<dbReference type="GlyGen" id="Q7TNF8">
    <property type="glycosylation" value="4 sites, 1 O-linked glycan (1 site)"/>
</dbReference>
<dbReference type="iPTMnet" id="Q7TNF8"/>
<dbReference type="PhosphoSitePlus" id="Q7TNF8"/>
<dbReference type="jPOST" id="Q7TNF8"/>
<dbReference type="PaxDb" id="10090-ENSMUSP00000048063"/>
<dbReference type="ProteomicsDB" id="255217">
    <molecule id="Q7TNF8-1"/>
</dbReference>
<dbReference type="ProteomicsDB" id="255218">
    <molecule id="Q7TNF8-2"/>
</dbReference>
<dbReference type="ProteomicsDB" id="255219">
    <molecule id="Q7TNF8-3"/>
</dbReference>
<dbReference type="ProteomicsDB" id="255220">
    <molecule id="Q7TNF8-4"/>
</dbReference>
<dbReference type="Antibodypedia" id="18369">
    <property type="antibodies" value="24 antibodies from 11 providers"/>
</dbReference>
<dbReference type="Ensembl" id="ENSMUST00000039627.12">
    <molecule id="Q7TNF8-1"/>
    <property type="protein sequence ID" value="ENSMUSP00000048063.6"/>
    <property type="gene ID" value="ENSMUSG00000034156.17"/>
</dbReference>
<dbReference type="GeneID" id="207777"/>
<dbReference type="KEGG" id="mmu:207777"/>
<dbReference type="UCSC" id="uc007kum.2">
    <molecule id="Q7TNF8-1"/>
    <property type="organism name" value="mouse"/>
</dbReference>
<dbReference type="UCSC" id="uc007kup.2">
    <molecule id="Q7TNF8-3"/>
    <property type="organism name" value="mouse"/>
</dbReference>
<dbReference type="AGR" id="MGI:2450877"/>
<dbReference type="CTD" id="9256"/>
<dbReference type="MGI" id="MGI:2450877">
    <property type="gene designation" value="Tspoap1"/>
</dbReference>
<dbReference type="VEuPathDB" id="HostDB:ENSMUSG00000034156"/>
<dbReference type="eggNOG" id="KOG3632">
    <property type="taxonomic scope" value="Eukaryota"/>
</dbReference>
<dbReference type="GeneTree" id="ENSGT00950000183203"/>
<dbReference type="HOGENOM" id="CLU_001979_1_0_1"/>
<dbReference type="InParanoid" id="Q7TNF8"/>
<dbReference type="OMA" id="VSAPMPR"/>
<dbReference type="OrthoDB" id="4158657at2759"/>
<dbReference type="PhylomeDB" id="Q7TNF8"/>
<dbReference type="TreeFam" id="TF316230"/>
<dbReference type="Reactome" id="R-MMU-181429">
    <property type="pathway name" value="Serotonin Neurotransmitter Release Cycle"/>
</dbReference>
<dbReference type="Reactome" id="R-MMU-181430">
    <property type="pathway name" value="Norepinephrine Neurotransmitter Release Cycle"/>
</dbReference>
<dbReference type="Reactome" id="R-MMU-196108">
    <property type="pathway name" value="Pregnenolone biosynthesis"/>
</dbReference>
<dbReference type="Reactome" id="R-MMU-210500">
    <property type="pathway name" value="Glutamate Neurotransmitter Release Cycle"/>
</dbReference>
<dbReference type="Reactome" id="R-MMU-212676">
    <property type="pathway name" value="Dopamine Neurotransmitter Release Cycle"/>
</dbReference>
<dbReference type="Reactome" id="R-MMU-264642">
    <property type="pathway name" value="Acetylcholine Neurotransmitter Release Cycle"/>
</dbReference>
<dbReference type="BioGRID-ORCS" id="207777">
    <property type="hits" value="2 hits in 78 CRISPR screens"/>
</dbReference>
<dbReference type="ChiTaRS" id="Rbp1">
    <property type="organism name" value="mouse"/>
</dbReference>
<dbReference type="PRO" id="PR:Q7TNF8"/>
<dbReference type="Proteomes" id="UP000000589">
    <property type="component" value="Chromosome 11"/>
</dbReference>
<dbReference type="RNAct" id="Q7TNF8">
    <property type="molecule type" value="protein"/>
</dbReference>
<dbReference type="Bgee" id="ENSMUSG00000034156">
    <property type="expression patterns" value="Expressed in superior colliculus and 142 other cell types or tissues"/>
</dbReference>
<dbReference type="ExpressionAtlas" id="Q7TNF8">
    <property type="expression patterns" value="baseline and differential"/>
</dbReference>
<dbReference type="GO" id="GO:0044305">
    <property type="term" value="C:calyx of Held"/>
    <property type="evidence" value="ECO:0000314"/>
    <property type="project" value="SynGO"/>
</dbReference>
<dbReference type="GO" id="GO:0098978">
    <property type="term" value="C:glutamatergic synapse"/>
    <property type="evidence" value="ECO:0000314"/>
    <property type="project" value="SynGO"/>
</dbReference>
<dbReference type="GO" id="GO:0005739">
    <property type="term" value="C:mitochondrion"/>
    <property type="evidence" value="ECO:0007669"/>
    <property type="project" value="UniProtKB-SubCell"/>
</dbReference>
<dbReference type="GO" id="GO:0030156">
    <property type="term" value="F:benzodiazepine receptor binding"/>
    <property type="evidence" value="ECO:0007669"/>
    <property type="project" value="Ensembl"/>
</dbReference>
<dbReference type="GO" id="GO:0099626">
    <property type="term" value="F:voltage-gated calcium channel activity involved in regulation of presynaptic cytosolic calcium levels"/>
    <property type="evidence" value="ECO:0000314"/>
    <property type="project" value="SynGO"/>
</dbReference>
<dbReference type="GO" id="GO:0046928">
    <property type="term" value="P:regulation of neurotransmitter secretion"/>
    <property type="evidence" value="ECO:0000250"/>
    <property type="project" value="UniProtKB"/>
</dbReference>
<dbReference type="CDD" id="cd00063">
    <property type="entry name" value="FN3"/>
    <property type="match status" value="1"/>
</dbReference>
<dbReference type="CDD" id="cd12014">
    <property type="entry name" value="SH3_RIM-BP_1"/>
    <property type="match status" value="1"/>
</dbReference>
<dbReference type="CDD" id="cd12012">
    <property type="entry name" value="SH3_RIM-BP_2"/>
    <property type="match status" value="1"/>
</dbReference>
<dbReference type="CDD" id="cd12013">
    <property type="entry name" value="SH3_RIM-BP_3"/>
    <property type="match status" value="1"/>
</dbReference>
<dbReference type="FunFam" id="2.30.30.40:FF:000023">
    <property type="entry name" value="RIMS-binding protein 2 isoform F"/>
    <property type="match status" value="1"/>
</dbReference>
<dbReference type="FunFam" id="2.30.30.40:FF:000006">
    <property type="entry name" value="RIMS-binding protein 2 isoform X1"/>
    <property type="match status" value="1"/>
</dbReference>
<dbReference type="FunFam" id="2.60.40.10:FF:000072">
    <property type="entry name" value="RIMS-binding protein 2 isoform X1"/>
    <property type="match status" value="1"/>
</dbReference>
<dbReference type="FunFam" id="2.30.30.40:FF:000016">
    <property type="entry name" value="RIMS-binding protein 2 isoform X2"/>
    <property type="match status" value="1"/>
</dbReference>
<dbReference type="Gene3D" id="2.60.40.10">
    <property type="entry name" value="Immunoglobulins"/>
    <property type="match status" value="1"/>
</dbReference>
<dbReference type="Gene3D" id="2.30.30.40">
    <property type="entry name" value="SH3 Domains"/>
    <property type="match status" value="3"/>
</dbReference>
<dbReference type="InterPro" id="IPR003961">
    <property type="entry name" value="FN3_dom"/>
</dbReference>
<dbReference type="InterPro" id="IPR036116">
    <property type="entry name" value="FN3_sf"/>
</dbReference>
<dbReference type="InterPro" id="IPR013783">
    <property type="entry name" value="Ig-like_fold"/>
</dbReference>
<dbReference type="InterPro" id="IPR035753">
    <property type="entry name" value="RIM-BP_SH3_2"/>
</dbReference>
<dbReference type="InterPro" id="IPR035755">
    <property type="entry name" value="RIM-BP_SH3_3"/>
</dbReference>
<dbReference type="InterPro" id="IPR040325">
    <property type="entry name" value="RIMBP1/2/3"/>
</dbReference>
<dbReference type="InterPro" id="IPR036028">
    <property type="entry name" value="SH3-like_dom_sf"/>
</dbReference>
<dbReference type="InterPro" id="IPR001452">
    <property type="entry name" value="SH3_domain"/>
</dbReference>
<dbReference type="PANTHER" id="PTHR14234:SF20">
    <property type="entry name" value="PERIPHERAL-TYPE BENZODIAZEPINE RECEPTOR-ASSOCIATED PROTEIN 1"/>
    <property type="match status" value="1"/>
</dbReference>
<dbReference type="PANTHER" id="PTHR14234">
    <property type="entry name" value="RIM BINDING PROTEIN-RELATED"/>
    <property type="match status" value="1"/>
</dbReference>
<dbReference type="Pfam" id="PF07653">
    <property type="entry name" value="SH3_2"/>
    <property type="match status" value="2"/>
</dbReference>
<dbReference type="Pfam" id="PF14604">
    <property type="entry name" value="SH3_9"/>
    <property type="match status" value="1"/>
</dbReference>
<dbReference type="SMART" id="SM00060">
    <property type="entry name" value="FN3"/>
    <property type="match status" value="3"/>
</dbReference>
<dbReference type="SMART" id="SM00326">
    <property type="entry name" value="SH3"/>
    <property type="match status" value="3"/>
</dbReference>
<dbReference type="SUPFAM" id="SSF49265">
    <property type="entry name" value="Fibronectin type III"/>
    <property type="match status" value="1"/>
</dbReference>
<dbReference type="SUPFAM" id="SSF50044">
    <property type="entry name" value="SH3-domain"/>
    <property type="match status" value="3"/>
</dbReference>
<dbReference type="PROSITE" id="PS50853">
    <property type="entry name" value="FN3"/>
    <property type="match status" value="3"/>
</dbReference>
<dbReference type="PROSITE" id="PS50002">
    <property type="entry name" value="SH3"/>
    <property type="match status" value="3"/>
</dbReference>
<accession>Q7TNF8</accession>
<accession>Q5NCP7</accession>
<accession>Q80TV9</accession>
<accession>Q8BIH5</accession>
<reference key="1">
    <citation type="journal article" date="2005" name="Science">
        <title>The transcriptional landscape of the mammalian genome.</title>
        <authorList>
            <person name="Carninci P."/>
            <person name="Kasukawa T."/>
            <person name="Katayama S."/>
            <person name="Gough J."/>
            <person name="Frith M.C."/>
            <person name="Maeda N."/>
            <person name="Oyama R."/>
            <person name="Ravasi T."/>
            <person name="Lenhard B."/>
            <person name="Wells C."/>
            <person name="Kodzius R."/>
            <person name="Shimokawa K."/>
            <person name="Bajic V.B."/>
            <person name="Brenner S.E."/>
            <person name="Batalov S."/>
            <person name="Forrest A.R."/>
            <person name="Zavolan M."/>
            <person name="Davis M.J."/>
            <person name="Wilming L.G."/>
            <person name="Aidinis V."/>
            <person name="Allen J.E."/>
            <person name="Ambesi-Impiombato A."/>
            <person name="Apweiler R."/>
            <person name="Aturaliya R.N."/>
            <person name="Bailey T.L."/>
            <person name="Bansal M."/>
            <person name="Baxter L."/>
            <person name="Beisel K.W."/>
            <person name="Bersano T."/>
            <person name="Bono H."/>
            <person name="Chalk A.M."/>
            <person name="Chiu K.P."/>
            <person name="Choudhary V."/>
            <person name="Christoffels A."/>
            <person name="Clutterbuck D.R."/>
            <person name="Crowe M.L."/>
            <person name="Dalla E."/>
            <person name="Dalrymple B.P."/>
            <person name="de Bono B."/>
            <person name="Della Gatta G."/>
            <person name="di Bernardo D."/>
            <person name="Down T."/>
            <person name="Engstrom P."/>
            <person name="Fagiolini M."/>
            <person name="Faulkner G."/>
            <person name="Fletcher C.F."/>
            <person name="Fukushima T."/>
            <person name="Furuno M."/>
            <person name="Futaki S."/>
            <person name="Gariboldi M."/>
            <person name="Georgii-Hemming P."/>
            <person name="Gingeras T.R."/>
            <person name="Gojobori T."/>
            <person name="Green R.E."/>
            <person name="Gustincich S."/>
            <person name="Harbers M."/>
            <person name="Hayashi Y."/>
            <person name="Hensch T.K."/>
            <person name="Hirokawa N."/>
            <person name="Hill D."/>
            <person name="Huminiecki L."/>
            <person name="Iacono M."/>
            <person name="Ikeo K."/>
            <person name="Iwama A."/>
            <person name="Ishikawa T."/>
            <person name="Jakt M."/>
            <person name="Kanapin A."/>
            <person name="Katoh M."/>
            <person name="Kawasawa Y."/>
            <person name="Kelso J."/>
            <person name="Kitamura H."/>
            <person name="Kitano H."/>
            <person name="Kollias G."/>
            <person name="Krishnan S.P."/>
            <person name="Kruger A."/>
            <person name="Kummerfeld S.K."/>
            <person name="Kurochkin I.V."/>
            <person name="Lareau L.F."/>
            <person name="Lazarevic D."/>
            <person name="Lipovich L."/>
            <person name="Liu J."/>
            <person name="Liuni S."/>
            <person name="McWilliam S."/>
            <person name="Madan Babu M."/>
            <person name="Madera M."/>
            <person name="Marchionni L."/>
            <person name="Matsuda H."/>
            <person name="Matsuzawa S."/>
            <person name="Miki H."/>
            <person name="Mignone F."/>
            <person name="Miyake S."/>
            <person name="Morris K."/>
            <person name="Mottagui-Tabar S."/>
            <person name="Mulder N."/>
            <person name="Nakano N."/>
            <person name="Nakauchi H."/>
            <person name="Ng P."/>
            <person name="Nilsson R."/>
            <person name="Nishiguchi S."/>
            <person name="Nishikawa S."/>
            <person name="Nori F."/>
            <person name="Ohara O."/>
            <person name="Okazaki Y."/>
            <person name="Orlando V."/>
            <person name="Pang K.C."/>
            <person name="Pavan W.J."/>
            <person name="Pavesi G."/>
            <person name="Pesole G."/>
            <person name="Petrovsky N."/>
            <person name="Piazza S."/>
            <person name="Reed J."/>
            <person name="Reid J.F."/>
            <person name="Ring B.Z."/>
            <person name="Ringwald M."/>
            <person name="Rost B."/>
            <person name="Ruan Y."/>
            <person name="Salzberg S.L."/>
            <person name="Sandelin A."/>
            <person name="Schneider C."/>
            <person name="Schoenbach C."/>
            <person name="Sekiguchi K."/>
            <person name="Semple C.A."/>
            <person name="Seno S."/>
            <person name="Sessa L."/>
            <person name="Sheng Y."/>
            <person name="Shibata Y."/>
            <person name="Shimada H."/>
            <person name="Shimada K."/>
            <person name="Silva D."/>
            <person name="Sinclair B."/>
            <person name="Sperling S."/>
            <person name="Stupka E."/>
            <person name="Sugiura K."/>
            <person name="Sultana R."/>
            <person name="Takenaka Y."/>
            <person name="Taki K."/>
            <person name="Tammoja K."/>
            <person name="Tan S.L."/>
            <person name="Tang S."/>
            <person name="Taylor M.S."/>
            <person name="Tegner J."/>
            <person name="Teichmann S.A."/>
            <person name="Ueda H.R."/>
            <person name="van Nimwegen E."/>
            <person name="Verardo R."/>
            <person name="Wei C.L."/>
            <person name="Yagi K."/>
            <person name="Yamanishi H."/>
            <person name="Zabarovsky E."/>
            <person name="Zhu S."/>
            <person name="Zimmer A."/>
            <person name="Hide W."/>
            <person name="Bult C."/>
            <person name="Grimmond S.M."/>
            <person name="Teasdale R.D."/>
            <person name="Liu E.T."/>
            <person name="Brusic V."/>
            <person name="Quackenbush J."/>
            <person name="Wahlestedt C."/>
            <person name="Mattick J.S."/>
            <person name="Hume D.A."/>
            <person name="Kai C."/>
            <person name="Sasaki D."/>
            <person name="Tomaru Y."/>
            <person name="Fukuda S."/>
            <person name="Kanamori-Katayama M."/>
            <person name="Suzuki M."/>
            <person name="Aoki J."/>
            <person name="Arakawa T."/>
            <person name="Iida J."/>
            <person name="Imamura K."/>
            <person name="Itoh M."/>
            <person name="Kato T."/>
            <person name="Kawaji H."/>
            <person name="Kawagashira N."/>
            <person name="Kawashima T."/>
            <person name="Kojima M."/>
            <person name="Kondo S."/>
            <person name="Konno H."/>
            <person name="Nakano K."/>
            <person name="Ninomiya N."/>
            <person name="Nishio T."/>
            <person name="Okada M."/>
            <person name="Plessy C."/>
            <person name="Shibata K."/>
            <person name="Shiraki T."/>
            <person name="Suzuki S."/>
            <person name="Tagami M."/>
            <person name="Waki K."/>
            <person name="Watahiki A."/>
            <person name="Okamura-Oho Y."/>
            <person name="Suzuki H."/>
            <person name="Kawai J."/>
            <person name="Hayashizaki Y."/>
        </authorList>
    </citation>
    <scope>NUCLEOTIDE SEQUENCE [LARGE SCALE MRNA] (ISOFORM 3)</scope>
    <source>
        <strain>C57BL/6J</strain>
        <tissue>Eye</tissue>
    </source>
</reference>
<reference key="2">
    <citation type="journal article" date="2009" name="PLoS Biol.">
        <title>Lineage-specific biology revealed by a finished genome assembly of the mouse.</title>
        <authorList>
            <person name="Church D.M."/>
            <person name="Goodstadt L."/>
            <person name="Hillier L.W."/>
            <person name="Zody M.C."/>
            <person name="Goldstein S."/>
            <person name="She X."/>
            <person name="Bult C.J."/>
            <person name="Agarwala R."/>
            <person name="Cherry J.L."/>
            <person name="DiCuccio M."/>
            <person name="Hlavina W."/>
            <person name="Kapustin Y."/>
            <person name="Meric P."/>
            <person name="Maglott D."/>
            <person name="Birtle Z."/>
            <person name="Marques A.C."/>
            <person name="Graves T."/>
            <person name="Zhou S."/>
            <person name="Teague B."/>
            <person name="Potamousis K."/>
            <person name="Churas C."/>
            <person name="Place M."/>
            <person name="Herschleb J."/>
            <person name="Runnheim R."/>
            <person name="Forrest D."/>
            <person name="Amos-Landgraf J."/>
            <person name="Schwartz D.C."/>
            <person name="Cheng Z."/>
            <person name="Lindblad-Toh K."/>
            <person name="Eichler E.E."/>
            <person name="Ponting C.P."/>
        </authorList>
    </citation>
    <scope>NUCLEOTIDE SEQUENCE [LARGE SCALE GENOMIC DNA]</scope>
    <source>
        <strain>C57BL/6J</strain>
    </source>
</reference>
<reference key="3">
    <citation type="journal article" date="2004" name="Genome Res.">
        <title>The status, quality, and expansion of the NIH full-length cDNA project: the Mammalian Gene Collection (MGC).</title>
        <authorList>
            <consortium name="The MGC Project Team"/>
        </authorList>
    </citation>
    <scope>NUCLEOTIDE SEQUENCE [LARGE SCALE MRNA] OF 1184-1846 (ISOFORM 2)</scope>
    <source>
        <strain>C57BL/6J</strain>
        <tissue>Brain</tissue>
    </source>
</reference>
<reference key="4">
    <citation type="journal article" date="2003" name="DNA Res.">
        <title>Prediction of the coding sequences of mouse homologues of KIAA gene: II. The complete nucleotide sequences of 400 mouse KIAA-homologous cDNAs identified by screening of terminal sequences of cDNA clones randomly sampled from size-fractionated libraries.</title>
        <authorList>
            <person name="Okazaki N."/>
            <person name="Kikuno R."/>
            <person name="Ohara R."/>
            <person name="Inamoto S."/>
            <person name="Aizawa H."/>
            <person name="Yuasa S."/>
            <person name="Nakajima D."/>
            <person name="Nagase T."/>
            <person name="Ohara O."/>
            <person name="Koga H."/>
        </authorList>
    </citation>
    <scope>NUCLEOTIDE SEQUENCE [LARGE SCALE MRNA] OF 1481-1846 (ISOFORM 4)</scope>
    <source>
        <tissue>Brain</tissue>
    </source>
</reference>
<reference key="5">
    <citation type="journal article" date="1999" name="J. Biol. Chem.">
        <title>Cloning and characterization of PRAX-1. A new protein that specifically interacts with the peripheral benzodiazepine receptor.</title>
        <authorList>
            <person name="Galiegue S."/>
            <person name="Jbilo O."/>
            <person name="Combes T."/>
            <person name="Bribes E."/>
            <person name="Carayon P."/>
            <person name="Le Fur G."/>
            <person name="Casellas P."/>
        </authorList>
    </citation>
    <scope>TISSUE SPECIFICITY</scope>
</reference>
<reference key="6">
    <citation type="journal article" date="2021" name="J. Clin. Invest.">
        <title>Biallelic variants in TSPOAP1, encoding the active-zone protein RIMBP1, cause autosomal recessive dystonia.</title>
        <authorList>
            <person name="Mencacci N.E."/>
            <person name="Brockmann M.M."/>
            <person name="Dai J."/>
            <person name="Pajusalu S."/>
            <person name="Atasu B."/>
            <person name="Campos J."/>
            <person name="Pino G."/>
            <person name="Gonzalez-Latapi P."/>
            <person name="Patzke C."/>
            <person name="Schwake M."/>
            <person name="Tucci A."/>
            <person name="Pittman A."/>
            <person name="Simon-Sanchez J."/>
            <person name="Carvill G.L."/>
            <person name="Balint B."/>
            <person name="Wiethoff S."/>
            <person name="Warner T.T."/>
            <person name="Papandreou A."/>
            <person name="Soo A."/>
            <person name="Rein R."/>
            <person name="Kadastik-Eerme L."/>
            <person name="Puusepp S."/>
            <person name="Reinson K."/>
            <person name="Tomberg T."/>
            <person name="Hanagasi H."/>
            <person name="Gasser T."/>
            <person name="Bhatia K.P."/>
            <person name="Kurian M.A."/>
            <person name="Lohmann E."/>
            <person name="Ounap K."/>
            <person name="Rosenmund C."/>
            <person name="Suedhof T.C."/>
            <person name="Wood N.W."/>
            <person name="Krainc D."/>
            <person name="Acuna C."/>
        </authorList>
    </citation>
    <scope>DISRUPTION PHENOTYPE</scope>
</reference>
<sequence length="1846" mass="199929">MEQLTTLPRLGDLGAMEPWALPAWQHWTQGQGCKPGDASPSIAGTPTALQVKGLRFEESSKPEGAHSPGPVGNTDPEATETGLPKLGQQAESPGYSCSGLEEEEAQAYKAKFNIGFGDRPNLELLRALGELQQRCTILKEENQMLRKSSFPETEEKVRRLKRKNAELAVIAKRLEERAQKLQETNMRVVSAPVPRPGSSLELCRKALARQRARDLSETASALLAKDKQIAALQRECRELQARLSLVGKEGPQWLHMRDFDRLLRESQREVLRLQRQIALRNQREPLRPARSPGPTAPSRVGAPAPGAPGEAVLQDDVESPQVVLREPEKQQRVQQLESELCKKRKKCESLEQEARKKQRRCEELELQLRAAQNENARLVEENSRLSGRATEKEQVEWENSELKGQLLGVTQERDSALLKSQGLQSKLESLEQVLKHMREVAQRRQQLEVEHEQARLSLQEKQEEVRRLQQAQAEAKREHEGAVQLLESTLDSMQARVRELEGQCRSQTERFSLLAQELQAFRLHPGPLDLLTSALGCSALGDHPPPHCCCSIPQPCQGSGPKDLDLPPGSPGRCTPKSSEPALTTLTGIPRRTAKKAESLSNSSRSESIHNSPKSCPTPEVDTASEVEELEVDSVSLLPAAPESHSGGARIQVFLARYSYNPFEGPNENPEAELPLTAGEYIYIYGNMDEDGFFEGELMDGRRGLVPSNFVERVSDDDLLSTLPRELADSSHSSGPELSFLSGGGGGCSSGGQSSGGRSQPRPEEEAAGDELSLSPPPEGLGEPLAVPYPRHITVLKQLAHSVVLAWELPPERVDLRGFHIFVNGELRQALGPGVPPKAVLENMDLRTGPLHVSVQALTSKGSSDPLRCCLAVGAGAGVVPSQLRIHRLTATSAEIAWVPGNSNLAHAIYLNGEECPPARPSTYWATFCNLRPGTLYQARVEAQIPSQGPWEPGWERPEQRAATLQFTTLPAGLPDAPLDVQAEPGPSPGILMISWLPVTIDAAGTSNGVRVTGYAIYADGQKIMEVASPTAGSVLVEVSQLQLLQACHEVTVRTMSPHGESSDSIPAPVAPALASACQPARMSCLSPRPSPEVRTPLASVSPGLGDTSFPLRHPVPHGTQDFSASLSIEMSKGPQEEPPVPCSQEEAGAAVRSISEEKRAIEPTLGQEGPEPVAPSLAKQEVECTSGDAGPVPCSTQGELTQKKPSIEACHGGDLDSGLKLRSEKEDMSELGVHLVNSLVDHSRNSDLSDIQEEEEEEEEEEEELGSRPCSSQKQVAGNSIRENGAKPQPDPFCETDSDEEILEQILELPLQRLCSKKLFSIPEEEEEEEEEEGLEKPGPSRTSQDPSQPELALLGPGCDSSQPQGPGLCPLSPELSGVREHLEDVLGVVGGNGRRRGGGSPEKLPNRKRPQDPREHCSRLLGNGGPQASARPVPPRERGSLPVIEGTRVGQEPGGRGRPGLSRRCPRGPAPESSLVSCLSPKCLEISIEYDSEDEQEAGSGGVSINSSCYPTDGEAWGTAAVGRPRGPPKVNPGPNAYLRLPAWEKGEPERRGRSAIGRTKEPPSRATETGESRGQDNSGRRGPQRRGARVPRSGTTELAPPRSPQEAPPHQDLPVRVFVALFDYDPVSMSPNPDAGEEELPFKEGQLLKVFGDKDADGFYRGESGGRTGYIPCNMVAEVAVDSPAGRQQLLQRGFLPPNVLTEASGNGPSVYSSAHTPGPPPKPRRSKKVELEGPTQLCPGPPKLIHSAAQKTSRPMVAAFDYNPRENSPNMDVEAELPFRAGDVITVFGNMDDDGFYYGELNGQRGLVPSNFLEGPGPESGSLESGTSQAESQRTRRRRVQC</sequence>
<protein>
    <recommendedName>
        <fullName>Peripheral-type benzodiazepine receptor-associated protein 1</fullName>
        <shortName>PRAX-1</shortName>
    </recommendedName>
    <alternativeName>
        <fullName>Peripheral benzodiazepine receptor-interacting protein</fullName>
        <shortName>PBR-IP</shortName>
    </alternativeName>
    <alternativeName>
        <fullName>RIMS-binding protein 1</fullName>
        <shortName>RIM-BP1</shortName>
    </alternativeName>
    <alternativeName>
        <fullName evidence="2">TSPO-associated protein 1</fullName>
    </alternativeName>
</protein>
<name>RIMB1_MOUSE</name>
<gene>
    <name evidence="2" type="primary">Tspoap1</name>
    <name type="synonym">Bzrap1</name>
    <name type="synonym">Kiaa0612</name>
    <name type="synonym">Rbp1</name>
</gene>
<organism>
    <name type="scientific">Mus musculus</name>
    <name type="common">Mouse</name>
    <dbReference type="NCBI Taxonomy" id="10090"/>
    <lineage>
        <taxon>Eukaryota</taxon>
        <taxon>Metazoa</taxon>
        <taxon>Chordata</taxon>
        <taxon>Craniata</taxon>
        <taxon>Vertebrata</taxon>
        <taxon>Euteleostomi</taxon>
        <taxon>Mammalia</taxon>
        <taxon>Eutheria</taxon>
        <taxon>Euarchontoglires</taxon>
        <taxon>Glires</taxon>
        <taxon>Rodentia</taxon>
        <taxon>Myomorpha</taxon>
        <taxon>Muroidea</taxon>
        <taxon>Muridae</taxon>
        <taxon>Murinae</taxon>
        <taxon>Mus</taxon>
        <taxon>Mus</taxon>
    </lineage>
</organism>
<comment type="function">
    <text evidence="2">Required for synaptic transmission regulation. It probably controls the recruitement of voltage-gated calcium channels to the presynaptic membrane, and modulates neurotransmitter release.</text>
</comment>
<comment type="subunit">
    <text evidence="1 2">Interacts with RIMS1 and RIMS2 (By similarity). Interacts with TSPO (By similarity). Interacts with CACNA1A (By similarity).</text>
</comment>
<comment type="subcellular location">
    <subcellularLocation>
        <location evidence="2">Cytoplasm</location>
    </subcellularLocation>
    <subcellularLocation>
        <location evidence="2">Mitochondrion</location>
    </subcellularLocation>
    <text evidence="2">Preferentially expressed in the mitochondria in the presence of TSPO.</text>
</comment>
<comment type="alternative products">
    <event type="alternative splicing"/>
    <isoform>
        <id>Q7TNF8-1</id>
        <name>1</name>
        <sequence type="displayed"/>
    </isoform>
    <isoform>
        <id>Q7TNF8-2</id>
        <name>2</name>
        <sequence type="described" ref="VSP_009207"/>
    </isoform>
    <isoform>
        <id>Q7TNF8-3</id>
        <name>3</name>
        <sequence type="described" ref="VSP_009206 VSP_009210"/>
    </isoform>
    <isoform>
        <id>Q7TNF8-4</id>
        <name>4</name>
        <sequence type="described" ref="VSP_009208 VSP_009209"/>
    </isoform>
</comment>
<comment type="tissue specificity">
    <text evidence="7">Predominantly expressed in the brain.</text>
</comment>
<comment type="domain">
    <text evidence="1">The SH3 and proline-rich domain is required for the interaction with TSPO and the second SH3 domain mediates binding to a proline-rich motif in RIMS1 and RIMS2.</text>
</comment>
<comment type="disruption phenotype">
    <text evidence="6">Knockout mice have several motor abnormalities, including increased spontaneous locomotion, abnormal coordination, and dystonic movements and postures in response to oxotremorine, a muscarinic agonist. Mutant animals also have a reduced number of cerebellar synapses, and decreased Purkinje cell dendritic arborization.</text>
</comment>
<comment type="miscellaneous">
    <molecule>Isoform 4</molecule>
    <text evidence="11">Due to intron retention.</text>
</comment>
<comment type="similarity">
    <text evidence="11">Belongs to the RIMBP family.</text>
</comment>
<feature type="chain" id="PRO_0000221381" description="Peripheral-type benzodiazepine receptor-associated protein 1">
    <location>
        <begin position="1"/>
        <end position="1846"/>
    </location>
</feature>
<feature type="domain" description="SH3 1" evidence="3">
    <location>
        <begin position="649"/>
        <end position="716"/>
    </location>
</feature>
<feature type="domain" description="Fibronectin type-III 1" evidence="4">
    <location>
        <begin position="787"/>
        <end position="878"/>
    </location>
</feature>
<feature type="domain" description="Fibronectin type-III 2" evidence="4">
    <location>
        <begin position="880"/>
        <end position="972"/>
    </location>
</feature>
<feature type="domain" description="Fibronectin type-III 3" evidence="4">
    <location>
        <begin position="977"/>
        <end position="1075"/>
    </location>
</feature>
<feature type="domain" description="SH3 2" evidence="3">
    <location>
        <begin position="1616"/>
        <end position="1684"/>
    </location>
</feature>
<feature type="domain" description="SH3 3" evidence="3">
    <location>
        <begin position="1755"/>
        <end position="1822"/>
    </location>
</feature>
<feature type="region of interest" description="Disordered" evidence="5">
    <location>
        <begin position="57"/>
        <end position="97"/>
    </location>
</feature>
<feature type="region of interest" description="Disordered" evidence="5">
    <location>
        <begin position="281"/>
        <end position="318"/>
    </location>
</feature>
<feature type="region of interest" description="Disordered" evidence="5">
    <location>
        <begin position="560"/>
        <end position="628"/>
    </location>
</feature>
<feature type="region of interest" description="Disordered" evidence="5">
    <location>
        <begin position="726"/>
        <end position="785"/>
    </location>
</feature>
<feature type="region of interest" description="Disordered" evidence="5">
    <location>
        <begin position="1084"/>
        <end position="1107"/>
    </location>
</feature>
<feature type="region of interest" description="Disordered" evidence="5">
    <location>
        <begin position="1163"/>
        <end position="1219"/>
    </location>
</feature>
<feature type="region of interest" description="Disordered" evidence="5">
    <location>
        <begin position="1243"/>
        <end position="1302"/>
    </location>
</feature>
<feature type="region of interest" description="Disordered" evidence="5">
    <location>
        <begin position="1322"/>
        <end position="1476"/>
    </location>
</feature>
<feature type="region of interest" description="Disordered" evidence="5">
    <location>
        <begin position="1492"/>
        <end position="1617"/>
    </location>
</feature>
<feature type="region of interest" description="Disordered" evidence="5">
    <location>
        <begin position="1704"/>
        <end position="1755"/>
    </location>
</feature>
<feature type="region of interest" description="Disordered" evidence="5">
    <location>
        <begin position="1812"/>
        <end position="1846"/>
    </location>
</feature>
<feature type="compositionally biased region" description="Polar residues" evidence="5">
    <location>
        <begin position="576"/>
        <end position="587"/>
    </location>
</feature>
<feature type="compositionally biased region" description="Low complexity" evidence="5">
    <location>
        <begin position="599"/>
        <end position="612"/>
    </location>
</feature>
<feature type="compositionally biased region" description="Gly residues" evidence="5">
    <location>
        <begin position="742"/>
        <end position="755"/>
    </location>
</feature>
<feature type="compositionally biased region" description="Basic and acidic residues" evidence="5">
    <location>
        <begin position="1202"/>
        <end position="1219"/>
    </location>
</feature>
<feature type="compositionally biased region" description="Acidic residues" evidence="5">
    <location>
        <begin position="1251"/>
        <end position="1265"/>
    </location>
</feature>
<feature type="compositionally biased region" description="Polar residues" evidence="5">
    <location>
        <begin position="1270"/>
        <end position="1283"/>
    </location>
</feature>
<feature type="compositionally biased region" description="Acidic residues" evidence="5">
    <location>
        <begin position="1324"/>
        <end position="1335"/>
    </location>
</feature>
<feature type="compositionally biased region" description="Basic and acidic residues" evidence="5">
    <location>
        <begin position="1411"/>
        <end position="1420"/>
    </location>
</feature>
<feature type="compositionally biased region" description="Basic and acidic residues" evidence="5">
    <location>
        <begin position="1545"/>
        <end position="1577"/>
    </location>
</feature>
<feature type="compositionally biased region" description="Polar residues" evidence="5">
    <location>
        <begin position="1705"/>
        <end position="1719"/>
    </location>
</feature>
<feature type="compositionally biased region" description="Low complexity" evidence="5">
    <location>
        <begin position="1817"/>
        <end position="1830"/>
    </location>
</feature>
<feature type="splice variant" id="VSP_009206" description="In isoform 3." evidence="10">
    <location>
        <begin position="1"/>
        <end position="1631"/>
    </location>
</feature>
<feature type="splice variant" id="VSP_009207" description="In isoform 2." evidence="9">
    <location>
        <begin position="1289"/>
        <end position="1568"/>
    </location>
</feature>
<feature type="splice variant" id="VSP_009208" description="In isoform 4." evidence="8">
    <original>LSPKCLEISIEYDSEDEQEAGSGGVSINSSCYPTDGEAWGTAAVGRPRGPPKVNPGPNAYLRLPAWEKGEPERRGRSAIGRTKEPPSR</original>
    <variation>QETVLSHSPWPLQAPLLHSSIGELGASARPSTVGVSGTSARLGQAPGEEFCAPVLMCCLRCRRGQSRGVWATTEDSVSPLPSVALSLQ</variation>
    <location>
        <begin position="1481"/>
        <end position="1568"/>
    </location>
</feature>
<feature type="splice variant" id="VSP_009209" description="In isoform 4." evidence="8">
    <original>GELNGQRGLVPSNFLEGPGPESGSLESGTSQAESQRTRRRRVQC</original>
    <variation>VRSSWGKEGVLCSGSPAGHAYGQTFLAEGWR</variation>
    <location>
        <begin position="1803"/>
        <end position="1846"/>
    </location>
</feature>
<feature type="splice variant" id="VSP_009210" description="In isoform 3." evidence="10">
    <original>RTRRRRVQC</original>
    <variation>DPRITIQGPPVPPGWHCALSSGSSSRTKLGESQSIAEKKQGLLAKAKELLKRLGSRKD</variation>
    <location>
        <begin position="1838"/>
        <end position="1846"/>
    </location>
</feature>
<feature type="sequence conflict" description="In Ref. 1; BAC34805." evidence="11" ref="1">
    <original>Y</original>
    <variation>C</variation>
    <location>
        <position position="1715"/>
    </location>
</feature>
<proteinExistence type="evidence at transcript level"/>
<keyword id="KW-0025">Alternative splicing</keyword>
<keyword id="KW-0963">Cytoplasm</keyword>
<keyword id="KW-0496">Mitochondrion</keyword>
<keyword id="KW-1185">Reference proteome</keyword>
<keyword id="KW-0677">Repeat</keyword>
<keyword id="KW-0728">SH3 domain</keyword>
<evidence type="ECO:0000250" key="1"/>
<evidence type="ECO:0000250" key="2">
    <source>
        <dbReference type="UniProtKB" id="O95153"/>
    </source>
</evidence>
<evidence type="ECO:0000255" key="3">
    <source>
        <dbReference type="PROSITE-ProRule" id="PRU00192"/>
    </source>
</evidence>
<evidence type="ECO:0000255" key="4">
    <source>
        <dbReference type="PROSITE-ProRule" id="PRU00316"/>
    </source>
</evidence>
<evidence type="ECO:0000256" key="5">
    <source>
        <dbReference type="SAM" id="MobiDB-lite"/>
    </source>
</evidence>
<evidence type="ECO:0000269" key="6">
    <source>
    </source>
</evidence>
<evidence type="ECO:0000269" key="7">
    <source>
    </source>
</evidence>
<evidence type="ECO:0000303" key="8">
    <source>
    </source>
</evidence>
<evidence type="ECO:0000303" key="9">
    <source>
    </source>
</evidence>
<evidence type="ECO:0000303" key="10">
    <source>
    </source>
</evidence>
<evidence type="ECO:0000305" key="11"/>